<reference key="1">
    <citation type="journal article" date="1998" name="Proc. Natl. Acad. Sci. U.S.A.">
        <title>Mammalian cytidine 5-prime-monophosphate N-acetylneuraminic acid synthetase: a nuclear protein with evolutionarily conserved structural motifs.</title>
        <authorList>
            <person name="Muenster A.-K."/>
            <person name="Eckhardt M."/>
            <person name="Potvin B."/>
            <person name="Muehlenhoff M."/>
            <person name="Stanley P."/>
            <person name="Gerardy-Schahn R."/>
        </authorList>
    </citation>
    <scope>NUCLEOTIDE SEQUENCE [MRNA] (ISOFORM 1)</scope>
    <scope>FUNCTION</scope>
    <scope>ENZYME ACTIVITY</scope>
    <scope>SUBCELLULAR LOCATION</scope>
    <scope>TISSUE SPECIFICITY</scope>
</reference>
<reference key="2">
    <citation type="journal article" date="2005" name="Science">
        <title>The transcriptional landscape of the mammalian genome.</title>
        <authorList>
            <person name="Carninci P."/>
            <person name="Kasukawa T."/>
            <person name="Katayama S."/>
            <person name="Gough J."/>
            <person name="Frith M.C."/>
            <person name="Maeda N."/>
            <person name="Oyama R."/>
            <person name="Ravasi T."/>
            <person name="Lenhard B."/>
            <person name="Wells C."/>
            <person name="Kodzius R."/>
            <person name="Shimokawa K."/>
            <person name="Bajic V.B."/>
            <person name="Brenner S.E."/>
            <person name="Batalov S."/>
            <person name="Forrest A.R."/>
            <person name="Zavolan M."/>
            <person name="Davis M.J."/>
            <person name="Wilming L.G."/>
            <person name="Aidinis V."/>
            <person name="Allen J.E."/>
            <person name="Ambesi-Impiombato A."/>
            <person name="Apweiler R."/>
            <person name="Aturaliya R.N."/>
            <person name="Bailey T.L."/>
            <person name="Bansal M."/>
            <person name="Baxter L."/>
            <person name="Beisel K.W."/>
            <person name="Bersano T."/>
            <person name="Bono H."/>
            <person name="Chalk A.M."/>
            <person name="Chiu K.P."/>
            <person name="Choudhary V."/>
            <person name="Christoffels A."/>
            <person name="Clutterbuck D.R."/>
            <person name="Crowe M.L."/>
            <person name="Dalla E."/>
            <person name="Dalrymple B.P."/>
            <person name="de Bono B."/>
            <person name="Della Gatta G."/>
            <person name="di Bernardo D."/>
            <person name="Down T."/>
            <person name="Engstrom P."/>
            <person name="Fagiolini M."/>
            <person name="Faulkner G."/>
            <person name="Fletcher C.F."/>
            <person name="Fukushima T."/>
            <person name="Furuno M."/>
            <person name="Futaki S."/>
            <person name="Gariboldi M."/>
            <person name="Georgii-Hemming P."/>
            <person name="Gingeras T.R."/>
            <person name="Gojobori T."/>
            <person name="Green R.E."/>
            <person name="Gustincich S."/>
            <person name="Harbers M."/>
            <person name="Hayashi Y."/>
            <person name="Hensch T.K."/>
            <person name="Hirokawa N."/>
            <person name="Hill D."/>
            <person name="Huminiecki L."/>
            <person name="Iacono M."/>
            <person name="Ikeo K."/>
            <person name="Iwama A."/>
            <person name="Ishikawa T."/>
            <person name="Jakt M."/>
            <person name="Kanapin A."/>
            <person name="Katoh M."/>
            <person name="Kawasawa Y."/>
            <person name="Kelso J."/>
            <person name="Kitamura H."/>
            <person name="Kitano H."/>
            <person name="Kollias G."/>
            <person name="Krishnan S.P."/>
            <person name="Kruger A."/>
            <person name="Kummerfeld S.K."/>
            <person name="Kurochkin I.V."/>
            <person name="Lareau L.F."/>
            <person name="Lazarevic D."/>
            <person name="Lipovich L."/>
            <person name="Liu J."/>
            <person name="Liuni S."/>
            <person name="McWilliam S."/>
            <person name="Madan Babu M."/>
            <person name="Madera M."/>
            <person name="Marchionni L."/>
            <person name="Matsuda H."/>
            <person name="Matsuzawa S."/>
            <person name="Miki H."/>
            <person name="Mignone F."/>
            <person name="Miyake S."/>
            <person name="Morris K."/>
            <person name="Mottagui-Tabar S."/>
            <person name="Mulder N."/>
            <person name="Nakano N."/>
            <person name="Nakauchi H."/>
            <person name="Ng P."/>
            <person name="Nilsson R."/>
            <person name="Nishiguchi S."/>
            <person name="Nishikawa S."/>
            <person name="Nori F."/>
            <person name="Ohara O."/>
            <person name="Okazaki Y."/>
            <person name="Orlando V."/>
            <person name="Pang K.C."/>
            <person name="Pavan W.J."/>
            <person name="Pavesi G."/>
            <person name="Pesole G."/>
            <person name="Petrovsky N."/>
            <person name="Piazza S."/>
            <person name="Reed J."/>
            <person name="Reid J.F."/>
            <person name="Ring B.Z."/>
            <person name="Ringwald M."/>
            <person name="Rost B."/>
            <person name="Ruan Y."/>
            <person name="Salzberg S.L."/>
            <person name="Sandelin A."/>
            <person name="Schneider C."/>
            <person name="Schoenbach C."/>
            <person name="Sekiguchi K."/>
            <person name="Semple C.A."/>
            <person name="Seno S."/>
            <person name="Sessa L."/>
            <person name="Sheng Y."/>
            <person name="Shibata Y."/>
            <person name="Shimada H."/>
            <person name="Shimada K."/>
            <person name="Silva D."/>
            <person name="Sinclair B."/>
            <person name="Sperling S."/>
            <person name="Stupka E."/>
            <person name="Sugiura K."/>
            <person name="Sultana R."/>
            <person name="Takenaka Y."/>
            <person name="Taki K."/>
            <person name="Tammoja K."/>
            <person name="Tan S.L."/>
            <person name="Tang S."/>
            <person name="Taylor M.S."/>
            <person name="Tegner J."/>
            <person name="Teichmann S.A."/>
            <person name="Ueda H.R."/>
            <person name="van Nimwegen E."/>
            <person name="Verardo R."/>
            <person name="Wei C.L."/>
            <person name="Yagi K."/>
            <person name="Yamanishi H."/>
            <person name="Zabarovsky E."/>
            <person name="Zhu S."/>
            <person name="Zimmer A."/>
            <person name="Hide W."/>
            <person name="Bult C."/>
            <person name="Grimmond S.M."/>
            <person name="Teasdale R.D."/>
            <person name="Liu E.T."/>
            <person name="Brusic V."/>
            <person name="Quackenbush J."/>
            <person name="Wahlestedt C."/>
            <person name="Mattick J.S."/>
            <person name="Hume D.A."/>
            <person name="Kai C."/>
            <person name="Sasaki D."/>
            <person name="Tomaru Y."/>
            <person name="Fukuda S."/>
            <person name="Kanamori-Katayama M."/>
            <person name="Suzuki M."/>
            <person name="Aoki J."/>
            <person name="Arakawa T."/>
            <person name="Iida J."/>
            <person name="Imamura K."/>
            <person name="Itoh M."/>
            <person name="Kato T."/>
            <person name="Kawaji H."/>
            <person name="Kawagashira N."/>
            <person name="Kawashima T."/>
            <person name="Kojima M."/>
            <person name="Kondo S."/>
            <person name="Konno H."/>
            <person name="Nakano K."/>
            <person name="Ninomiya N."/>
            <person name="Nishio T."/>
            <person name="Okada M."/>
            <person name="Plessy C."/>
            <person name="Shibata K."/>
            <person name="Shiraki T."/>
            <person name="Suzuki S."/>
            <person name="Tagami M."/>
            <person name="Waki K."/>
            <person name="Watahiki A."/>
            <person name="Okamura-Oho Y."/>
            <person name="Suzuki H."/>
            <person name="Kawai J."/>
            <person name="Hayashizaki Y."/>
        </authorList>
    </citation>
    <scope>NUCLEOTIDE SEQUENCE [LARGE SCALE MRNA] (ISOFORM 2)</scope>
    <source>
        <strain>C57BL/6J</strain>
        <tissue>Lung</tissue>
    </source>
</reference>
<reference key="3">
    <citation type="journal article" date="2004" name="Genome Res.">
        <title>The status, quality, and expansion of the NIH full-length cDNA project: the Mammalian Gene Collection (MGC).</title>
        <authorList>
            <consortium name="The MGC Project Team"/>
        </authorList>
    </citation>
    <scope>NUCLEOTIDE SEQUENCE [LARGE SCALE MRNA] (ISOFORM 1)</scope>
    <source>
        <strain>FVB/N</strain>
        <tissue>Colon</tissue>
        <tissue>Mammary tumor</tissue>
    </source>
</reference>
<reference key="4">
    <citation type="journal article" date="2002" name="J. Biol. Chem.">
        <title>Nuclear localization signal of murine CMP-Neu5Ac synthetase includes residues required for both nuclear targeting and enzymatic activity.</title>
        <authorList>
            <person name="Muenster A.-K."/>
            <person name="Weinhold B."/>
            <person name="Gotza B."/>
            <person name="Muehlenhoff M."/>
            <person name="Frosch M."/>
            <person name="Gerardy-Schahn R."/>
        </authorList>
    </citation>
    <scope>SUBCELLULAR LOCATION</scope>
    <scope>ENZYME ACTIVITY</scope>
    <scope>MUTAGENESIS OF LYS-198; ARG-199; PRO-200; ARG-201; ARG-202; GLN-203 AND ASP-204</scope>
</reference>
<reference key="5">
    <citation type="journal article" date="2010" name="Cell">
        <title>A tissue-specific atlas of mouse protein phosphorylation and expression.</title>
        <authorList>
            <person name="Huttlin E.L."/>
            <person name="Jedrychowski M.P."/>
            <person name="Elias J.E."/>
            <person name="Goswami T."/>
            <person name="Rad R."/>
            <person name="Beausoleil S.A."/>
            <person name="Villen J."/>
            <person name="Haas W."/>
            <person name="Sowa M.E."/>
            <person name="Gygi S.P."/>
        </authorList>
    </citation>
    <scope>IDENTIFICATION BY MASS SPECTROMETRY [LARGE SCALE ANALYSIS]</scope>
    <source>
        <tissue>Brain</tissue>
        <tissue>Liver</tissue>
        <tissue>Pancreas</tissue>
    </source>
</reference>
<reference key="6">
    <citation type="journal article" date="2014" name="Mol. Cell. Proteomics">
        <title>Immunoaffinity enrichment and mass spectrometry analysis of protein methylation.</title>
        <authorList>
            <person name="Guo A."/>
            <person name="Gu H."/>
            <person name="Zhou J."/>
            <person name="Mulhern D."/>
            <person name="Wang Y."/>
            <person name="Lee K.A."/>
            <person name="Yang V."/>
            <person name="Aguiar M."/>
            <person name="Kornhauser J."/>
            <person name="Jia X."/>
            <person name="Ren J."/>
            <person name="Beausoleil S.A."/>
            <person name="Silva J.C."/>
            <person name="Vemulapalli V."/>
            <person name="Bedford M.T."/>
            <person name="Comb M.J."/>
        </authorList>
    </citation>
    <scope>METHYLATION [LARGE SCALE ANALYSIS] AT ARG-35 AND ARG-50</scope>
    <scope>IDENTIFICATION BY MASS SPECTROMETRY [LARGE SCALE ANALYSIS]</scope>
    <source>
        <tissue>Brain</tissue>
        <tissue>Embryo</tissue>
    </source>
</reference>
<reference key="7">
    <citation type="journal article" date="2003" name="J. Mol. Biol.">
        <title>The crystal structure of murine CMP-5-N-acetylneuraminic acid synthetase.</title>
        <authorList>
            <person name="Krapp S."/>
            <person name="Muenster-Kuehnel A.-K."/>
            <person name="Kaiser J.T."/>
            <person name="Huber R."/>
            <person name="Tiralongo J."/>
            <person name="Gerardy-Schahn R."/>
            <person name="Jacob U."/>
        </authorList>
    </citation>
    <scope>X-RAY CRYSTALLOGRAPHY (2.8 ANGSTROMS) OF 40-268 IN COMPLEX WITH CMP-NEUNAC</scope>
    <scope>SUBUNIT</scope>
</reference>
<feature type="chain" id="PRO_0000213200" description="N-acylneuraminate cytidylyltransferase">
    <location>
        <begin position="1"/>
        <end position="432"/>
    </location>
</feature>
<feature type="region of interest" description="Disordered" evidence="2">
    <location>
        <begin position="1"/>
        <end position="38"/>
    </location>
</feature>
<feature type="short sequence motif" description="BC1 motif">
    <location>
        <begin position="15"/>
        <end position="31"/>
    </location>
</feature>
<feature type="short sequence motif" description="BC2 motif">
    <location>
        <begin position="198"/>
        <end position="204"/>
    </location>
</feature>
<feature type="short sequence motif" description="BC3 motif">
    <location>
        <begin position="267"/>
        <end position="274"/>
    </location>
</feature>
<feature type="compositionally biased region" description="Basic residues" evidence="2">
    <location>
        <begin position="18"/>
        <end position="29"/>
    </location>
</feature>
<feature type="active site">
    <location>
        <position position="199"/>
    </location>
</feature>
<feature type="binding site">
    <location>
        <position position="50"/>
    </location>
    <ligand>
        <name>substrate</name>
    </ligand>
</feature>
<feature type="binding site">
    <location>
        <position position="60"/>
    </location>
    <ligand>
        <name>substrate</name>
    </ligand>
</feature>
<feature type="binding site">
    <location>
        <position position="109"/>
    </location>
    <ligand>
        <name>substrate</name>
    </ligand>
</feature>
<feature type="binding site">
    <location>
        <position position="118"/>
    </location>
    <ligand>
        <name>substrate</name>
    </ligand>
</feature>
<feature type="binding site">
    <location>
        <position position="120"/>
    </location>
    <ligand>
        <name>substrate</name>
    </ligand>
</feature>
<feature type="binding site">
    <location>
        <position position="141"/>
    </location>
    <ligand>
        <name>substrate</name>
    </ligand>
</feature>
<feature type="modified residue" description="N-acetylmethionine" evidence="1">
    <location>
        <position position="1"/>
    </location>
</feature>
<feature type="modified residue" description="Omega-N-methylarginine" evidence="8">
    <location>
        <position position="35"/>
    </location>
</feature>
<feature type="modified residue" description="Omega-N-methylarginine" evidence="8">
    <location>
        <position position="50"/>
    </location>
</feature>
<feature type="splice variant" id="VSP_012765" description="In isoform 2." evidence="6">
    <location>
        <begin position="1"/>
        <end position="232"/>
    </location>
</feature>
<feature type="mutagenesis site" description="Does not affect the nuclear localization.">
    <original>P</original>
    <variation>A</variation>
    <location>
        <position position="196"/>
    </location>
</feature>
<feature type="mutagenesis site" description="Abolishes the nuclear localization but does not affect the enzyme activity; when associated with A-201." evidence="3">
    <original>K</original>
    <variation>A</variation>
    <location>
        <position position="198"/>
    </location>
</feature>
<feature type="mutagenesis site" description="Abolishes both the nuclear localization and the enzyme activity." evidence="3">
    <original>R</original>
    <variation>A</variation>
    <location>
        <position position="199"/>
    </location>
</feature>
<feature type="mutagenesis site" description="Does not affect neither the nuclear localization nor the enzyme activity." evidence="3">
    <original>P</original>
    <variation>A</variation>
    <location>
        <position position="200"/>
    </location>
</feature>
<feature type="mutagenesis site" description="Abolishes the nuclear localization but does not affect the enzyme activity; when associated with A-198." evidence="3">
    <original>R</original>
    <variation>A</variation>
    <location>
        <position position="201"/>
    </location>
</feature>
<feature type="mutagenesis site" description="Does not strongly affect the nuclear localization but strongly affects the enzyme activity." evidence="3">
    <original>R</original>
    <variation>A</variation>
    <location>
        <position position="202"/>
    </location>
</feature>
<feature type="mutagenesis site" description="Does not affect the nuclear localization but affects the enzyme activity." evidence="3">
    <original>Q</original>
    <variation>A</variation>
    <location>
        <position position="203"/>
    </location>
</feature>
<feature type="mutagenesis site" description="Does not affect the nuclear localization." evidence="3">
    <original>D</original>
    <variation>A</variation>
    <location>
        <position position="204"/>
    </location>
</feature>
<feature type="sequence conflict" description="In Ref. 3; AAH31500/AAH63776." evidence="7" ref="3">
    <original>V</original>
    <variation>A</variation>
    <location>
        <position position="9"/>
    </location>
</feature>
<feature type="strand" evidence="9">
    <location>
        <begin position="43"/>
        <end position="48"/>
    </location>
</feature>
<feature type="strand" evidence="9">
    <location>
        <begin position="54"/>
        <end position="57"/>
    </location>
</feature>
<feature type="turn" evidence="9">
    <location>
        <begin position="59"/>
        <end position="61"/>
    </location>
</feature>
<feature type="strand" evidence="9">
    <location>
        <begin position="62"/>
        <end position="64"/>
    </location>
</feature>
<feature type="helix" evidence="9">
    <location>
        <begin position="69"/>
        <end position="80"/>
    </location>
</feature>
<feature type="strand" evidence="9">
    <location>
        <begin position="84"/>
        <end position="91"/>
    </location>
</feature>
<feature type="helix" evidence="9">
    <location>
        <begin position="93"/>
        <end position="101"/>
    </location>
</feature>
<feature type="strand" evidence="9">
    <location>
        <begin position="105"/>
        <end position="108"/>
    </location>
</feature>
<feature type="helix" evidence="9">
    <location>
        <begin position="111"/>
        <end position="113"/>
    </location>
</feature>
<feature type="helix" evidence="9">
    <location>
        <begin position="120"/>
        <end position="128"/>
    </location>
</feature>
<feature type="strand" evidence="9">
    <location>
        <begin position="135"/>
        <end position="140"/>
    </location>
</feature>
<feature type="helix" evidence="9">
    <location>
        <begin position="149"/>
        <end position="160"/>
    </location>
</feature>
<feature type="strand" evidence="9">
    <location>
        <begin position="165"/>
        <end position="173"/>
    </location>
</feature>
<feature type="strand" evidence="9">
    <location>
        <begin position="191"/>
        <end position="195"/>
    </location>
</feature>
<feature type="turn" evidence="9">
    <location>
        <begin position="202"/>
        <end position="204"/>
    </location>
</feature>
<feature type="strand" evidence="9">
    <location>
        <begin position="208"/>
        <end position="219"/>
    </location>
</feature>
<feature type="helix" evidence="9">
    <location>
        <begin position="220"/>
        <end position="224"/>
    </location>
</feature>
<feature type="strand" evidence="9">
    <location>
        <begin position="231"/>
        <end position="237"/>
    </location>
</feature>
<feature type="helix" evidence="9">
    <location>
        <begin position="240"/>
        <end position="242"/>
    </location>
</feature>
<feature type="helix" evidence="9">
    <location>
        <begin position="246"/>
        <end position="249"/>
    </location>
</feature>
<feature type="helix" evidence="9">
    <location>
        <begin position="252"/>
        <end position="262"/>
    </location>
</feature>
<feature type="strand" evidence="10">
    <location>
        <begin position="275"/>
        <end position="279"/>
    </location>
</feature>
<feature type="helix" evidence="10">
    <location>
        <begin position="280"/>
        <end position="284"/>
    </location>
</feature>
<feature type="strand" evidence="10">
    <location>
        <begin position="298"/>
        <end position="302"/>
    </location>
</feature>
<feature type="helix" evidence="10">
    <location>
        <begin position="303"/>
        <end position="314"/>
    </location>
</feature>
<feature type="strand" evidence="10">
    <location>
        <begin position="318"/>
        <end position="322"/>
    </location>
</feature>
<feature type="helix" evidence="10">
    <location>
        <begin position="329"/>
        <end position="333"/>
    </location>
</feature>
<feature type="helix" evidence="10">
    <location>
        <begin position="348"/>
        <end position="358"/>
    </location>
</feature>
<feature type="helix" evidence="10">
    <location>
        <begin position="363"/>
        <end position="365"/>
    </location>
</feature>
<feature type="strand" evidence="10">
    <location>
        <begin position="366"/>
        <end position="369"/>
    </location>
</feature>
<feature type="helix" evidence="10">
    <location>
        <begin position="373"/>
        <end position="375"/>
    </location>
</feature>
<feature type="helix" evidence="10">
    <location>
        <begin position="376"/>
        <end position="381"/>
    </location>
</feature>
<feature type="strand" evidence="10">
    <location>
        <begin position="382"/>
        <end position="387"/>
    </location>
</feature>
<feature type="helix" evidence="10">
    <location>
        <begin position="393"/>
        <end position="396"/>
    </location>
</feature>
<feature type="strand" evidence="10">
    <location>
        <begin position="400"/>
        <end position="402"/>
    </location>
</feature>
<feature type="turn" evidence="10">
    <location>
        <begin position="407"/>
        <end position="410"/>
    </location>
</feature>
<feature type="helix" evidence="10">
    <location>
        <begin position="411"/>
        <end position="426"/>
    </location>
</feature>
<sequence length="432" mass="48058">MDALEKGAVTSGPAPRGRPSRGRPPKLQRSRGAGRGLEKPPHLAALVLARGGSKGIPLKNIKRLAGVPLIGWVLRAALDAGVFQSVWVSTDHDEIENVAKQFGAQVHRRSSETSKDSSTSLDAIVEFLNYHNEVDIVGNIQATSPCLHPTDLQKVAEMIREEGYDSVFSVVRRHQFRWSEIQKGVREVTEPLNLNPAKRPRRQDWDGELYENGSFYFAKRHLIEMGYLQGGKMAYYEMRAEHSVDIDVDIDWPIAEQRVLRFGYFGKEKLKEIKLLVCNIDGCLTNGHIYVSGDQKEIISYDVKDAIGISLLKKSGIEVRLISERACSKQTLSALKLDCKTEVSVSDKLATVDEWRKEMGLCWKEVAYLGNEVSDEECLKRVGLSAVPADACSGAQKAVGYICKCSGGRGAIREFAEHIFLLIEKVNNSCQK</sequence>
<proteinExistence type="evidence at protein level"/>
<protein>
    <recommendedName>
        <fullName>N-acylneuraminate cytidylyltransferase</fullName>
        <ecNumber>2.7.7.43</ecNumber>
    </recommendedName>
    <alternativeName>
        <fullName>CMP-N-acetylneuraminic acid synthase</fullName>
        <shortName>CMP-NeuNAc synthase</shortName>
    </alternativeName>
</protein>
<accession>Q99KK2</accession>
<accession>O88719</accession>
<accession>Q8C330</accession>
<accession>Q8K2G7</accession>
<evidence type="ECO:0000250" key="1">
    <source>
        <dbReference type="UniProtKB" id="Q8NFW8"/>
    </source>
</evidence>
<evidence type="ECO:0000256" key="2">
    <source>
        <dbReference type="SAM" id="MobiDB-lite"/>
    </source>
</evidence>
<evidence type="ECO:0000269" key="3">
    <source>
    </source>
</evidence>
<evidence type="ECO:0000269" key="4">
    <source>
    </source>
</evidence>
<evidence type="ECO:0000269" key="5">
    <source>
    </source>
</evidence>
<evidence type="ECO:0000303" key="6">
    <source>
    </source>
</evidence>
<evidence type="ECO:0000305" key="7"/>
<evidence type="ECO:0007744" key="8">
    <source>
    </source>
</evidence>
<evidence type="ECO:0007829" key="9">
    <source>
        <dbReference type="PDB" id="1QWJ"/>
    </source>
</evidence>
<evidence type="ECO:0007829" key="10">
    <source>
        <dbReference type="PDB" id="3EWI"/>
    </source>
</evidence>
<name>NEUA_MOUSE</name>
<organism>
    <name type="scientific">Mus musculus</name>
    <name type="common">Mouse</name>
    <dbReference type="NCBI Taxonomy" id="10090"/>
    <lineage>
        <taxon>Eukaryota</taxon>
        <taxon>Metazoa</taxon>
        <taxon>Chordata</taxon>
        <taxon>Craniata</taxon>
        <taxon>Vertebrata</taxon>
        <taxon>Euteleostomi</taxon>
        <taxon>Mammalia</taxon>
        <taxon>Eutheria</taxon>
        <taxon>Euarchontoglires</taxon>
        <taxon>Glires</taxon>
        <taxon>Rodentia</taxon>
        <taxon>Myomorpha</taxon>
        <taxon>Muroidea</taxon>
        <taxon>Muridae</taxon>
        <taxon>Murinae</taxon>
        <taxon>Mus</taxon>
        <taxon>Mus</taxon>
    </lineage>
</organism>
<dbReference type="EC" id="2.7.7.43"/>
<dbReference type="EMBL" id="AJ006215">
    <property type="protein sequence ID" value="CAA06915.1"/>
    <property type="molecule type" value="mRNA"/>
</dbReference>
<dbReference type="EMBL" id="AK087150">
    <property type="protein sequence ID" value="BAC39813.1"/>
    <property type="molecule type" value="mRNA"/>
</dbReference>
<dbReference type="EMBL" id="BC004606">
    <property type="protein sequence ID" value="AAH04606.1"/>
    <property type="molecule type" value="mRNA"/>
</dbReference>
<dbReference type="EMBL" id="BC031500">
    <property type="protein sequence ID" value="AAH31500.1"/>
    <property type="molecule type" value="mRNA"/>
</dbReference>
<dbReference type="EMBL" id="BC063776">
    <property type="protein sequence ID" value="AAH63776.1"/>
    <property type="molecule type" value="mRNA"/>
</dbReference>
<dbReference type="CCDS" id="CCDS20687.1">
    <molecule id="Q99KK2-1"/>
</dbReference>
<dbReference type="RefSeq" id="NP_034038.2">
    <property type="nucleotide sequence ID" value="NM_009908.2"/>
</dbReference>
<dbReference type="PDB" id="1QWJ">
    <property type="method" value="X-ray"/>
    <property type="resolution" value="2.80 A"/>
    <property type="chains" value="A/B/C/D=40-268"/>
</dbReference>
<dbReference type="PDB" id="3EWI">
    <property type="method" value="X-ray"/>
    <property type="resolution" value="1.90 A"/>
    <property type="chains" value="A/B=267-432"/>
</dbReference>
<dbReference type="PDBsum" id="1QWJ"/>
<dbReference type="PDBsum" id="3EWI"/>
<dbReference type="SMR" id="Q99KK2"/>
<dbReference type="BioGRID" id="198764">
    <property type="interactions" value="5"/>
</dbReference>
<dbReference type="FunCoup" id="Q99KK2">
    <property type="interactions" value="871"/>
</dbReference>
<dbReference type="STRING" id="10090.ENSMUSP00000032419"/>
<dbReference type="ChEMBL" id="CHEMBL4523436"/>
<dbReference type="GlyGen" id="Q99KK2">
    <property type="glycosylation" value="1 site, 1 O-linked glycan (1 site)"/>
</dbReference>
<dbReference type="iPTMnet" id="Q99KK2"/>
<dbReference type="PhosphoSitePlus" id="Q99KK2"/>
<dbReference type="SwissPalm" id="Q99KK2"/>
<dbReference type="jPOST" id="Q99KK2"/>
<dbReference type="PaxDb" id="10090-ENSMUSP00000032419"/>
<dbReference type="PeptideAtlas" id="Q99KK2"/>
<dbReference type="ProteomicsDB" id="252823">
    <molecule id="Q99KK2-1"/>
</dbReference>
<dbReference type="ProteomicsDB" id="252824">
    <molecule id="Q99KK2-2"/>
</dbReference>
<dbReference type="Pumba" id="Q99KK2"/>
<dbReference type="DNASU" id="12764"/>
<dbReference type="GeneID" id="12764"/>
<dbReference type="KEGG" id="mmu:12764"/>
<dbReference type="UCSC" id="uc009eps.2">
    <molecule id="Q99KK2-1"/>
    <property type="organism name" value="mouse"/>
</dbReference>
<dbReference type="AGR" id="MGI:1337124"/>
<dbReference type="CTD" id="55907"/>
<dbReference type="MGI" id="MGI:1337124">
    <property type="gene designation" value="Cmas"/>
</dbReference>
<dbReference type="eggNOG" id="ENOG502QQH3">
    <property type="taxonomic scope" value="Eukaryota"/>
</dbReference>
<dbReference type="InParanoid" id="Q99KK2"/>
<dbReference type="OrthoDB" id="10262032at2759"/>
<dbReference type="PhylomeDB" id="Q99KK2"/>
<dbReference type="TreeFam" id="TF324840"/>
<dbReference type="BioCyc" id="MetaCyc:MONOMER-14521"/>
<dbReference type="BRENDA" id="2.7.7.43">
    <property type="organism ID" value="3474"/>
</dbReference>
<dbReference type="BRENDA" id="2.7.7.92">
    <property type="organism ID" value="3474"/>
</dbReference>
<dbReference type="Reactome" id="R-MMU-4085001">
    <property type="pathway name" value="Sialic acid metabolism"/>
</dbReference>
<dbReference type="SABIO-RK" id="Q99KK2"/>
<dbReference type="UniPathway" id="UPA00628"/>
<dbReference type="BioGRID-ORCS" id="12764">
    <property type="hits" value="23 hits in 80 CRISPR screens"/>
</dbReference>
<dbReference type="CD-CODE" id="CE726F99">
    <property type="entry name" value="Postsynaptic density"/>
</dbReference>
<dbReference type="ChiTaRS" id="Cmas">
    <property type="organism name" value="mouse"/>
</dbReference>
<dbReference type="EvolutionaryTrace" id="Q99KK2"/>
<dbReference type="PRO" id="PR:Q99KK2"/>
<dbReference type="Proteomes" id="UP000000589">
    <property type="component" value="Unplaced"/>
</dbReference>
<dbReference type="RNAct" id="Q99KK2">
    <property type="molecule type" value="protein"/>
</dbReference>
<dbReference type="GO" id="GO:0005654">
    <property type="term" value="C:nucleoplasm"/>
    <property type="evidence" value="ECO:0000314"/>
    <property type="project" value="MGI"/>
</dbReference>
<dbReference type="GO" id="GO:0005634">
    <property type="term" value="C:nucleus"/>
    <property type="evidence" value="ECO:0000266"/>
    <property type="project" value="MGI"/>
</dbReference>
<dbReference type="GO" id="GO:0008781">
    <property type="term" value="F:N-acylneuraminate cytidylyltransferase activity"/>
    <property type="evidence" value="ECO:0000314"/>
    <property type="project" value="MGI"/>
</dbReference>
<dbReference type="GO" id="GO:0006055">
    <property type="term" value="P:CMP-N-acetylneuraminate biosynthetic process"/>
    <property type="evidence" value="ECO:0000315"/>
    <property type="project" value="MGI"/>
</dbReference>
<dbReference type="GO" id="GO:0006054">
    <property type="term" value="P:N-acetylneuraminate metabolic process"/>
    <property type="evidence" value="ECO:0000315"/>
    <property type="project" value="MGI"/>
</dbReference>
<dbReference type="CDD" id="cd02513">
    <property type="entry name" value="CMP-NeuAc_Synthase"/>
    <property type="match status" value="1"/>
</dbReference>
<dbReference type="CDD" id="cd01630">
    <property type="entry name" value="HAD_KDO-like"/>
    <property type="match status" value="1"/>
</dbReference>
<dbReference type="FunFam" id="3.40.50.1000:FF:000082">
    <property type="entry name" value="N-acylneuraminate cytidylyltransferase A"/>
    <property type="match status" value="1"/>
</dbReference>
<dbReference type="FunFam" id="3.90.550.10:FF:000074">
    <property type="entry name" value="N-acylneuraminate cytidylyltransferase A"/>
    <property type="match status" value="1"/>
</dbReference>
<dbReference type="Gene3D" id="3.40.50.1000">
    <property type="entry name" value="HAD superfamily/HAD-like"/>
    <property type="match status" value="1"/>
</dbReference>
<dbReference type="Gene3D" id="3.90.550.10">
    <property type="entry name" value="Spore Coat Polysaccharide Biosynthesis Protein SpsA, Chain A"/>
    <property type="match status" value="1"/>
</dbReference>
<dbReference type="InterPro" id="IPR050793">
    <property type="entry name" value="CMP-NeuNAc_synthase"/>
</dbReference>
<dbReference type="InterPro" id="IPR003329">
    <property type="entry name" value="Cytidylyl_trans"/>
</dbReference>
<dbReference type="InterPro" id="IPR036412">
    <property type="entry name" value="HAD-like_sf"/>
</dbReference>
<dbReference type="InterPro" id="IPR023214">
    <property type="entry name" value="HAD_sf"/>
</dbReference>
<dbReference type="InterPro" id="IPR029044">
    <property type="entry name" value="Nucleotide-diphossugar_trans"/>
</dbReference>
<dbReference type="PANTHER" id="PTHR21485">
    <property type="entry name" value="HAD SUPERFAMILY MEMBERS CMAS AND KDSC"/>
    <property type="match status" value="1"/>
</dbReference>
<dbReference type="PANTHER" id="PTHR21485:SF3">
    <property type="entry name" value="N-ACYLNEURAMINATE CYTIDYLYLTRANSFERASE"/>
    <property type="match status" value="1"/>
</dbReference>
<dbReference type="Pfam" id="PF02348">
    <property type="entry name" value="CTP_transf_3"/>
    <property type="match status" value="1"/>
</dbReference>
<dbReference type="SUPFAM" id="SSF56784">
    <property type="entry name" value="HAD-like"/>
    <property type="match status" value="1"/>
</dbReference>
<dbReference type="SUPFAM" id="SSF53448">
    <property type="entry name" value="Nucleotide-diphospho-sugar transferases"/>
    <property type="match status" value="1"/>
</dbReference>
<comment type="function">
    <text evidence="5">Catalyzes the activation of N-acetylneuraminic acid (NeuNAc) to cytidine 5'-monophosphate N-acetylneuraminic acid (CMP-NeuNAc), a substrate required for the addition of sialic acid. Has some activity toward NeuNAc, N-glycolylneuraminic acid (Neu5Gc) or 2-keto-3-deoxy-D-glycero-D-galacto-nononic acid (KDN).</text>
</comment>
<comment type="catalytic activity">
    <reaction evidence="3 5">
        <text>an N-acylneuraminate + CTP = a CMP-N-acyl-beta-neuraminate + diphosphate</text>
        <dbReference type="Rhea" id="RHEA:11344"/>
        <dbReference type="ChEBI" id="CHEBI:33019"/>
        <dbReference type="ChEBI" id="CHEBI:37563"/>
        <dbReference type="ChEBI" id="CHEBI:60073"/>
        <dbReference type="ChEBI" id="CHEBI:68671"/>
        <dbReference type="EC" id="2.7.7.43"/>
    </reaction>
</comment>
<comment type="pathway">
    <text>Amino-sugar metabolism; N-acetylneuraminate metabolism.</text>
</comment>
<comment type="subunit">
    <text evidence="4">Homotetramer; the active enzyme is formed by a dimer of dimers.</text>
</comment>
<comment type="subcellular location">
    <subcellularLocation>
        <location evidence="3 5">Nucleus</location>
    </subcellularLocation>
</comment>
<comment type="alternative products">
    <event type="alternative splicing"/>
    <isoform>
        <id>Q99KK2-1</id>
        <name>1</name>
        <sequence type="displayed"/>
    </isoform>
    <isoform>
        <id>Q99KK2-2</id>
        <name>2</name>
        <sequence type="described" ref="VSP_012765"/>
    </isoform>
</comment>
<comment type="tissue specificity">
    <text evidence="5">Highly expressed in brain and heart, and at intermediate level muscle and liver.</text>
</comment>
<comment type="domain">
    <text>The BC2 (basic cluster 2) motif is necessary and sufficient for the nuclear localization and contains the catalytic active site. The localization in the nucleus is however not required for the enzyme activity.</text>
</comment>
<comment type="miscellaneous">
    <molecule>Isoform 2</molecule>
    <text evidence="7">Inactive.</text>
</comment>
<comment type="similarity">
    <text evidence="7">Belongs to the CMP-NeuNAc synthase family.</text>
</comment>
<keyword id="KW-0002">3D-structure</keyword>
<keyword id="KW-0007">Acetylation</keyword>
<keyword id="KW-0025">Alternative splicing</keyword>
<keyword id="KW-0488">Methylation</keyword>
<keyword id="KW-0548">Nucleotidyltransferase</keyword>
<keyword id="KW-0539">Nucleus</keyword>
<keyword id="KW-1185">Reference proteome</keyword>
<keyword id="KW-0808">Transferase</keyword>
<gene>
    <name type="primary">Cmas</name>
</gene>